<gene>
    <name evidence="24" type="primary">MIA2</name>
    <name evidence="24" type="synonym">CTAGE5</name>
    <name type="synonym">MEA11</name>
    <name type="synonym">MEA6</name>
    <name type="synonym">MGEA11</name>
    <name type="synonym">MGEA6</name>
</gene>
<dbReference type="EMBL" id="U73682">
    <property type="protein sequence ID" value="AAB86589.1"/>
    <property type="status" value="ALT_INIT"/>
    <property type="molecule type" value="mRNA"/>
</dbReference>
<dbReference type="EMBL" id="U94780">
    <property type="protein sequence ID" value="AAB86593.1"/>
    <property type="molecule type" value="mRNA"/>
</dbReference>
<dbReference type="EMBL" id="AF338233">
    <property type="protein sequence ID" value="AAN77610.1"/>
    <property type="molecule type" value="mRNA"/>
</dbReference>
<dbReference type="EMBL" id="AF338234">
    <property type="protein sequence ID" value="AAN77611.1"/>
    <property type="molecule type" value="mRNA"/>
</dbReference>
<dbReference type="EMBL" id="KX388743">
    <property type="protein sequence ID" value="ANN89694.1"/>
    <property type="molecule type" value="mRNA"/>
</dbReference>
<dbReference type="EMBL" id="AK026057">
    <property type="protein sequence ID" value="BAB15339.1"/>
    <property type="status" value="ALT_INIT"/>
    <property type="molecule type" value="mRNA"/>
</dbReference>
<dbReference type="EMBL" id="AK091252">
    <property type="protein sequence ID" value="BAG52318.1"/>
    <property type="molecule type" value="mRNA"/>
</dbReference>
<dbReference type="EMBL" id="AK298935">
    <property type="protein sequence ID" value="BAG61038.1"/>
    <property type="molecule type" value="mRNA"/>
</dbReference>
<dbReference type="EMBL" id="BX640994">
    <property type="protein sequence ID" value="CAE45997.1"/>
    <property type="molecule type" value="mRNA"/>
</dbReference>
<dbReference type="EMBL" id="AL132639">
    <property type="status" value="NOT_ANNOTATED_CDS"/>
    <property type="molecule type" value="Genomic_DNA"/>
</dbReference>
<dbReference type="EMBL" id="AL157791">
    <property type="status" value="NOT_ANNOTATED_CDS"/>
    <property type="molecule type" value="Genomic_DNA"/>
</dbReference>
<dbReference type="EMBL" id="CH471078">
    <property type="protein sequence ID" value="EAW65808.1"/>
    <property type="molecule type" value="Genomic_DNA"/>
</dbReference>
<dbReference type="EMBL" id="CH471078">
    <property type="protein sequence ID" value="EAW65812.1"/>
    <property type="molecule type" value="Genomic_DNA"/>
</dbReference>
<dbReference type="EMBL" id="CH471078">
    <property type="protein sequence ID" value="EAW65813.1"/>
    <property type="molecule type" value="Genomic_DNA"/>
</dbReference>
<dbReference type="EMBL" id="CH471078">
    <property type="protein sequence ID" value="EAW65814.1"/>
    <property type="molecule type" value="Genomic_DNA"/>
</dbReference>
<dbReference type="EMBL" id="CH471078">
    <property type="protein sequence ID" value="EAW65818.1"/>
    <property type="molecule type" value="Genomic_DNA"/>
</dbReference>
<dbReference type="EMBL" id="BC051363">
    <property type="protein sequence ID" value="AAH51363.2"/>
    <property type="molecule type" value="mRNA"/>
</dbReference>
<dbReference type="EMBL" id="BC064355">
    <property type="protein sequence ID" value="AAH64355.1"/>
    <property type="molecule type" value="mRNA"/>
</dbReference>
<dbReference type="EMBL" id="BC130537">
    <property type="protein sequence ID" value="AAI30538.1"/>
    <property type="molecule type" value="mRNA"/>
</dbReference>
<dbReference type="EMBL" id="BC130563">
    <property type="protein sequence ID" value="AAI30564.1"/>
    <property type="molecule type" value="mRNA"/>
</dbReference>
<dbReference type="EMBL" id="AF390175">
    <property type="protein sequence ID" value="AAL26990.2"/>
    <property type="status" value="ALT_SEQ"/>
    <property type="molecule type" value="mRNA"/>
</dbReference>
<dbReference type="CCDS" id="CCDS58316.1">
    <molecule id="Q96PC5-12"/>
</dbReference>
<dbReference type="CCDS" id="CCDS58317.1">
    <molecule id="Q96PC5-13"/>
</dbReference>
<dbReference type="CCDS" id="CCDS86384.1">
    <molecule id="Q96PC5-3"/>
</dbReference>
<dbReference type="CCDS" id="CCDS86385.1">
    <molecule id="Q96PC5-10"/>
</dbReference>
<dbReference type="CCDS" id="CCDS86386.1">
    <molecule id="Q96PC5-11"/>
</dbReference>
<dbReference type="CCDS" id="CCDS9672.1">
    <molecule id="Q96PC5-2"/>
</dbReference>
<dbReference type="CCDS" id="CCDS9673.1">
    <molecule id="Q96PC5-14"/>
</dbReference>
<dbReference type="CCDS" id="CCDS9674.1">
    <molecule id="Q96PC5-7"/>
</dbReference>
<dbReference type="CCDS" id="CCDS9675.1">
    <molecule id="Q96PC5-8"/>
</dbReference>
<dbReference type="CCDS" id="CCDS9676.1">
    <molecule id="Q96PC5-9"/>
</dbReference>
<dbReference type="RefSeq" id="NP_001234917.1">
    <molecule id="Q96PC5-5"/>
    <property type="nucleotide sequence ID" value="NM_001247988.1"/>
</dbReference>
<dbReference type="RefSeq" id="NP_001234918.1">
    <molecule id="Q96PC5-12"/>
    <property type="nucleotide sequence ID" value="NM_001247989.2"/>
</dbReference>
<dbReference type="RefSeq" id="NP_001234919.1">
    <molecule id="Q96PC5-13"/>
    <property type="nucleotide sequence ID" value="NM_001247990.2"/>
</dbReference>
<dbReference type="RefSeq" id="NP_001316143.1">
    <molecule id="Q96PC5-3"/>
    <property type="nucleotide sequence ID" value="NM_001329214.4"/>
</dbReference>
<dbReference type="RefSeq" id="NP_001341066.1">
    <molecule id="Q96PC5-9"/>
    <property type="nucleotide sequence ID" value="NM_001354137.2"/>
</dbReference>
<dbReference type="RefSeq" id="NP_001341067.1">
    <molecule id="Q96PC5-9"/>
    <property type="nucleotide sequence ID" value="NM_001354138.1"/>
</dbReference>
<dbReference type="RefSeq" id="NP_001341068.1">
    <molecule id="Q96PC5-5"/>
    <property type="nucleotide sequence ID" value="NM_001354139.2"/>
</dbReference>
<dbReference type="RefSeq" id="NP_001341069.1">
    <molecule id="Q96PC5-11"/>
    <property type="nucleotide sequence ID" value="NM_001354140.2"/>
</dbReference>
<dbReference type="RefSeq" id="NP_001341070.1">
    <molecule id="Q96PC5-11"/>
    <property type="nucleotide sequence ID" value="NM_001354141.2"/>
</dbReference>
<dbReference type="RefSeq" id="NP_001341083.1">
    <molecule id="Q96PC5-10"/>
    <property type="nucleotide sequence ID" value="NM_001354154.2"/>
</dbReference>
<dbReference type="RefSeq" id="NP_005921.2">
    <molecule id="Q96PC5-7"/>
    <property type="nucleotide sequence ID" value="NM_005930.3"/>
</dbReference>
<dbReference type="RefSeq" id="NP_473365.3">
    <molecule id="Q96PC5-2"/>
    <property type="nucleotide sequence ID" value="NM_054024.3"/>
</dbReference>
<dbReference type="RefSeq" id="NP_976229.1">
    <molecule id="Q96PC5-14"/>
    <property type="nucleotide sequence ID" value="NM_203354.3"/>
</dbReference>
<dbReference type="RefSeq" id="NP_976230.1">
    <molecule id="Q96PC5-8"/>
    <property type="nucleotide sequence ID" value="NM_203355.3"/>
</dbReference>
<dbReference type="RefSeq" id="NP_976231.1">
    <molecule id="Q96PC5-9"/>
    <property type="nucleotide sequence ID" value="NM_203356.2"/>
</dbReference>
<dbReference type="RefSeq" id="XP_006720211.1">
    <property type="nucleotide sequence ID" value="XM_006720148.2"/>
</dbReference>
<dbReference type="RefSeq" id="XP_011535086.1">
    <property type="nucleotide sequence ID" value="XM_011536784.2"/>
</dbReference>
<dbReference type="RefSeq" id="XP_011535087.1">
    <property type="nucleotide sequence ID" value="XM_011536785.2"/>
</dbReference>
<dbReference type="RefSeq" id="XP_016876809.1">
    <property type="nucleotide sequence ID" value="XM_017021320.1"/>
</dbReference>
<dbReference type="RefSeq" id="XP_016876814.1">
    <property type="nucleotide sequence ID" value="XM_017021325.1"/>
</dbReference>
<dbReference type="RefSeq" id="XP_047287367.1">
    <molecule id="Q96PC5-5"/>
    <property type="nucleotide sequence ID" value="XM_047431411.1"/>
</dbReference>
<dbReference type="SMR" id="Q96PC5"/>
<dbReference type="BioGRID" id="110409">
    <property type="interactions" value="112"/>
</dbReference>
<dbReference type="BioGRID" id="125559">
    <property type="interactions" value="26"/>
</dbReference>
<dbReference type="CORUM" id="Q96PC5"/>
<dbReference type="FunCoup" id="Q96PC5">
    <property type="interactions" value="1123"/>
</dbReference>
<dbReference type="IntAct" id="Q96PC5">
    <property type="interactions" value="78"/>
</dbReference>
<dbReference type="MINT" id="Q96PC5"/>
<dbReference type="STRING" id="9606.ENSP00000491014"/>
<dbReference type="TCDB" id="9.B.113.1.4">
    <property type="family name" value="the collagen secretory protein, mia3 (mia3) family"/>
</dbReference>
<dbReference type="GlyCosmos" id="Q96PC5">
    <property type="glycosylation" value="3 sites, 1 glycan"/>
</dbReference>
<dbReference type="GlyGen" id="Q96PC5">
    <property type="glycosylation" value="4 sites, 2 N-linked glycans (2 sites), 1 O-linked glycan (2 sites)"/>
</dbReference>
<dbReference type="iPTMnet" id="Q96PC5"/>
<dbReference type="PhosphoSitePlus" id="Q96PC5"/>
<dbReference type="SwissPalm" id="Q96PC5"/>
<dbReference type="BioMuta" id="CTAGE5"/>
<dbReference type="BioMuta" id="HGNC:18432"/>
<dbReference type="DMDM" id="308153584"/>
<dbReference type="jPOST" id="Q96PC5"/>
<dbReference type="MassIVE" id="Q96PC5"/>
<dbReference type="PaxDb" id="9606-ENSP00000452252"/>
<dbReference type="PeptideAtlas" id="Q96PC5"/>
<dbReference type="ProteomicsDB" id="33711"/>
<dbReference type="ProteomicsDB" id="48581"/>
<dbReference type="ProteomicsDB" id="48582"/>
<dbReference type="ProteomicsDB" id="48583"/>
<dbReference type="ProteomicsDB" id="48584"/>
<dbReference type="ProteomicsDB" id="48585"/>
<dbReference type="ProteomicsDB" id="48586"/>
<dbReference type="ProteomicsDB" id="48587"/>
<dbReference type="ProteomicsDB" id="48588"/>
<dbReference type="ProteomicsDB" id="77665">
    <molecule id="Q96PC5-2"/>
</dbReference>
<dbReference type="Pumba" id="Q96PC5"/>
<dbReference type="Antibodypedia" id="79482">
    <property type="antibodies" value="328 antibodies from 27 providers"/>
</dbReference>
<dbReference type="DNASU" id="4253"/>
<dbReference type="Ensembl" id="ENST00000280082.4">
    <molecule id="Q96PC5-2"/>
    <property type="protein sequence ID" value="ENSP00000280082.3"/>
    <property type="gene ID" value="ENSG00000150527.18"/>
</dbReference>
<dbReference type="Ensembl" id="ENST00000280083.7">
    <molecule id="Q96PC5-7"/>
    <property type="protein sequence ID" value="ENSP00000280083.3"/>
    <property type="gene ID" value="ENSG00000150527.18"/>
</dbReference>
<dbReference type="Ensembl" id="ENST00000341502.9">
    <molecule id="Q96PC5-10"/>
    <property type="protein sequence ID" value="ENSP00000339286.5"/>
    <property type="gene ID" value="ENSG00000150527.18"/>
</dbReference>
<dbReference type="Ensembl" id="ENST00000341749.7">
    <molecule id="Q96PC5-14"/>
    <property type="protein sequence ID" value="ENSP00000343897.3"/>
    <property type="gene ID" value="ENSG00000150527.18"/>
</dbReference>
<dbReference type="Ensembl" id="ENST00000348007.7">
    <molecule id="Q96PC5-8"/>
    <property type="protein sequence ID" value="ENSP00000343912.3"/>
    <property type="gene ID" value="ENSG00000150527.18"/>
</dbReference>
<dbReference type="Ensembl" id="ENST00000396158.6">
    <molecule id="Q96PC5-12"/>
    <property type="protein sequence ID" value="ENSP00000379462.2"/>
    <property type="gene ID" value="ENSG00000150527.18"/>
</dbReference>
<dbReference type="Ensembl" id="ENST00000396165.8">
    <molecule id="Q96PC5-9"/>
    <property type="protein sequence ID" value="ENSP00000379468.4"/>
    <property type="gene ID" value="ENSG00000150527.18"/>
</dbReference>
<dbReference type="Ensembl" id="ENST00000553352.1">
    <molecule id="Q96PC5-9"/>
    <property type="protein sequence ID" value="ENSP00000450449.1"/>
    <property type="gene ID" value="ENSG00000150527.18"/>
</dbReference>
<dbReference type="Ensembl" id="ENST00000556148.5">
    <molecule id="Q96PC5-13"/>
    <property type="protein sequence ID" value="ENSP00000452562.1"/>
    <property type="gene ID" value="ENSG00000150527.18"/>
</dbReference>
<dbReference type="Ensembl" id="ENST00000557038.5">
    <molecule id="Q96PC5-11"/>
    <property type="protein sequence ID" value="ENSP00000450869.1"/>
    <property type="gene ID" value="ENSG00000150527.18"/>
</dbReference>
<dbReference type="Ensembl" id="ENST00000640607.2">
    <molecule id="Q96PC5-3"/>
    <property type="protein sequence ID" value="ENSP00000491014.1"/>
    <property type="gene ID" value="ENSG00000150527.18"/>
</dbReference>
<dbReference type="GeneID" id="4253"/>
<dbReference type="KEGG" id="hsa:4253"/>
<dbReference type="MANE-Select" id="ENST00000640607.2">
    <property type="protein sequence ID" value="ENSP00000491014.1"/>
    <property type="RefSeq nucleotide sequence ID" value="NM_001329214.4"/>
    <property type="RefSeq protein sequence ID" value="NP_001316143.1"/>
</dbReference>
<dbReference type="UCSC" id="uc001wux.4">
    <molecule id="Q96PC5-3"/>
    <property type="organism name" value="human"/>
</dbReference>
<dbReference type="AGR" id="HGNC:18432"/>
<dbReference type="CTD" id="4253"/>
<dbReference type="DisGeNET" id="4253"/>
<dbReference type="GeneCards" id="MIA2"/>
<dbReference type="HGNC" id="HGNC:18432">
    <property type="gene designation" value="MIA2"/>
</dbReference>
<dbReference type="HPA" id="ENSG00000150527">
    <property type="expression patterns" value="Tissue enhanced (liver)"/>
</dbReference>
<dbReference type="MIM" id="602132">
    <property type="type" value="gene"/>
</dbReference>
<dbReference type="neXtProt" id="NX_Q96PC5"/>
<dbReference type="OpenTargets" id="ENSG00000150527"/>
<dbReference type="PharmGKB" id="PA134870998"/>
<dbReference type="VEuPathDB" id="HostDB:ENSG00000150527"/>
<dbReference type="eggNOG" id="ENOG502QUND">
    <property type="taxonomic scope" value="Eukaryota"/>
</dbReference>
<dbReference type="GeneTree" id="ENSGT00950000182767"/>
<dbReference type="HOGENOM" id="CLU_028032_0_0_1"/>
<dbReference type="InParanoid" id="Q96PC5"/>
<dbReference type="OMA" id="LHDHKKE"/>
<dbReference type="OrthoDB" id="3548878at2759"/>
<dbReference type="PAN-GO" id="Q96PC5">
    <property type="GO annotations" value="5 GO annotations based on evolutionary models"/>
</dbReference>
<dbReference type="TreeFam" id="TF332724"/>
<dbReference type="TreeFam" id="TF333137"/>
<dbReference type="PathwayCommons" id="Q96PC5"/>
<dbReference type="Reactome" id="R-HSA-5694530">
    <property type="pathway name" value="Cargo concentration in the ER"/>
</dbReference>
<dbReference type="SignaLink" id="Q96PC5"/>
<dbReference type="BioGRID-ORCS" id="4253">
    <property type="hits" value="37 hits in 1155 CRISPR screens"/>
</dbReference>
<dbReference type="ChiTaRS" id="MIA2">
    <property type="organism name" value="human"/>
</dbReference>
<dbReference type="GeneWiki" id="CTAGE5"/>
<dbReference type="GeneWiki" id="MIA2"/>
<dbReference type="GenomeRNAi" id="4253"/>
<dbReference type="Pharos" id="Q96PC5">
    <property type="development level" value="Tbio"/>
</dbReference>
<dbReference type="PRO" id="PR:Q96PC5"/>
<dbReference type="Proteomes" id="UP000005640">
    <property type="component" value="Chromosome 14"/>
</dbReference>
<dbReference type="RNAct" id="Q96PC5">
    <property type="molecule type" value="protein"/>
</dbReference>
<dbReference type="Bgee" id="ENSG00000150527">
    <property type="expression patterns" value="Expressed in right lobe of liver and 190 other cell types or tissues"/>
</dbReference>
<dbReference type="ExpressionAtlas" id="Q96PC5">
    <property type="expression patterns" value="baseline and differential"/>
</dbReference>
<dbReference type="GO" id="GO:0005783">
    <property type="term" value="C:endoplasmic reticulum"/>
    <property type="evidence" value="ECO:0000314"/>
    <property type="project" value="HPA"/>
</dbReference>
<dbReference type="GO" id="GO:0070971">
    <property type="term" value="C:endoplasmic reticulum exit site"/>
    <property type="evidence" value="ECO:0000314"/>
    <property type="project" value="UniProtKB"/>
</dbReference>
<dbReference type="GO" id="GO:0005789">
    <property type="term" value="C:endoplasmic reticulum membrane"/>
    <property type="evidence" value="ECO:0000318"/>
    <property type="project" value="GO_Central"/>
</dbReference>
<dbReference type="GO" id="GO:0016020">
    <property type="term" value="C:membrane"/>
    <property type="evidence" value="ECO:0007005"/>
    <property type="project" value="UniProtKB"/>
</dbReference>
<dbReference type="GO" id="GO:0038024">
    <property type="term" value="F:cargo receptor activity"/>
    <property type="evidence" value="ECO:0000315"/>
    <property type="project" value="UniProtKB"/>
</dbReference>
<dbReference type="GO" id="GO:0008047">
    <property type="term" value="F:enzyme activator activity"/>
    <property type="evidence" value="ECO:0000304"/>
    <property type="project" value="UniProtKB"/>
</dbReference>
<dbReference type="GO" id="GO:0006888">
    <property type="term" value="P:endoplasmic reticulum to Golgi vesicle-mediated transport"/>
    <property type="evidence" value="ECO:0000315"/>
    <property type="project" value="UniProtKB"/>
</dbReference>
<dbReference type="GO" id="GO:0042953">
    <property type="term" value="P:lipoprotein transport"/>
    <property type="evidence" value="ECO:0000315"/>
    <property type="project" value="UniProtKB"/>
</dbReference>
<dbReference type="GO" id="GO:0032527">
    <property type="term" value="P:protein exit from endoplasmic reticulum"/>
    <property type="evidence" value="ECO:0000315"/>
    <property type="project" value="UniProtKB"/>
</dbReference>
<dbReference type="GO" id="GO:0070973">
    <property type="term" value="P:protein localization to endoplasmic reticulum exit site"/>
    <property type="evidence" value="ECO:0000315"/>
    <property type="project" value="UniProtKB"/>
</dbReference>
<dbReference type="GO" id="GO:0009306">
    <property type="term" value="P:protein secretion"/>
    <property type="evidence" value="ECO:0000318"/>
    <property type="project" value="GO_Central"/>
</dbReference>
<dbReference type="GO" id="GO:0035459">
    <property type="term" value="P:vesicle cargo loading"/>
    <property type="evidence" value="ECO:0000315"/>
    <property type="project" value="UniProtKB"/>
</dbReference>
<dbReference type="CDD" id="cd11892">
    <property type="entry name" value="SH3_MIA2"/>
    <property type="match status" value="1"/>
</dbReference>
<dbReference type="FunFam" id="2.30.30.40:FF:000142">
    <property type="entry name" value="melanoma inhibitory activity protein 2 isoform X2"/>
    <property type="match status" value="1"/>
</dbReference>
<dbReference type="Gene3D" id="2.30.30.40">
    <property type="entry name" value="SH3 Domains"/>
    <property type="match status" value="1"/>
</dbReference>
<dbReference type="InterPro" id="IPR051500">
    <property type="entry name" value="cTAGE_MIA/OTOR"/>
</dbReference>
<dbReference type="InterPro" id="IPR035555">
    <property type="entry name" value="MIA2_SH3"/>
</dbReference>
<dbReference type="InterPro" id="IPR036028">
    <property type="entry name" value="SH3-like_dom_sf"/>
</dbReference>
<dbReference type="InterPro" id="IPR001452">
    <property type="entry name" value="SH3_domain"/>
</dbReference>
<dbReference type="PANTHER" id="PTHR23158:SF38">
    <property type="entry name" value="MELANOMA INHIBITORY ACTIVITY PROTEIN 2"/>
    <property type="match status" value="1"/>
</dbReference>
<dbReference type="PANTHER" id="PTHR23158">
    <property type="entry name" value="MELANOMA INHIBITORY ACTIVITY-RELATED"/>
    <property type="match status" value="1"/>
</dbReference>
<dbReference type="Pfam" id="PF07653">
    <property type="entry name" value="SH3_2"/>
    <property type="match status" value="1"/>
</dbReference>
<dbReference type="SUPFAM" id="SSF50044">
    <property type="entry name" value="SH3-domain"/>
    <property type="match status" value="1"/>
</dbReference>
<dbReference type="PROSITE" id="PS50002">
    <property type="entry name" value="SH3"/>
    <property type="match status" value="1"/>
</dbReference>
<accession>Q96PC5</accession>
<accession>A0A193H6U5</accession>
<accession>A1L4H0</accession>
<accession>B3KRA6</accession>
<accession>B4DQS6</accession>
<accession>D3DSA6</accession>
<accession>G3XAC5</accession>
<accession>O00169</accession>
<accession>O15320</accession>
<accession>Q6MZN2</accession>
<accession>Q6P2R8</accession>
<accession>Q86TF6</accession>
<accession>Q8IX92</accession>
<accession>Q8IX93</accession>
<accession>Q9H6C1</accession>
<organism>
    <name type="scientific">Homo sapiens</name>
    <name type="common">Human</name>
    <dbReference type="NCBI Taxonomy" id="9606"/>
    <lineage>
        <taxon>Eukaryota</taxon>
        <taxon>Metazoa</taxon>
        <taxon>Chordata</taxon>
        <taxon>Craniata</taxon>
        <taxon>Vertebrata</taxon>
        <taxon>Euteleostomi</taxon>
        <taxon>Mammalia</taxon>
        <taxon>Eutheria</taxon>
        <taxon>Euarchontoglires</taxon>
        <taxon>Primates</taxon>
        <taxon>Haplorrhini</taxon>
        <taxon>Catarrhini</taxon>
        <taxon>Hominidae</taxon>
        <taxon>Homo</taxon>
    </lineage>
</organism>
<comment type="function">
    <text evidence="1 11 13 14 15">Plays a role in the transport of cargos that are too large to fit into COPII-coated vesicles and require specific mechanisms to be incorporated into membrane-bound carriers and exported from the endoplasmic reticulum (PubMed:21525241, PubMed:25202031, PubMed:27138255, PubMed:27170179). Plays a role in the secretion of lipoproteins, pre-chylomicrons and pre-VLDLs, by participating in their export from the endoplasmic reticulum (PubMed:27138255). Thereby, may play a role in cholesterol and triglyceride homeostasis (By similarity). Required for collagen VII (COL7A1) secretion by loading COL7A1 into transport carriers and recruiting PREB/SEC12 at the endoplasmic reticulum exit sites (PubMed:21525241, PubMed:25202031, PubMed:27170179).</text>
</comment>
<comment type="subunit">
    <text evidence="11 13 14 15 16">Interacts with MIA3 (PubMed:21525241, PubMed:25202031, PubMed:27138255, PubMed:27170179). Interacts with the COPII coat subunits SEC23A, SEC23B and maybe SEC24C (PubMed:21525241, PubMed:27551091). Interacts with PREB; recruits PREB to endoplasmic reticulum exit sites (PubMed:25202031, PubMed:27170179). Interacts with APOB (PubMed:27138255).</text>
</comment>
<comment type="interaction">
    <interactant intactId="EBI-1050253">
        <id>Q96PC5</id>
    </interactant>
    <interactant intactId="EBI-10175300">
        <id>Q8TD31-3</id>
        <label>CCHCR1</label>
    </interactant>
    <organismsDiffer>false</organismsDiffer>
    <experiments>3</experiments>
</comment>
<comment type="interaction">
    <interactant intactId="EBI-1050253">
        <id>Q96PC5</id>
    </interactant>
    <interactant intactId="EBI-308614">
        <id>Q86XR8</id>
        <label>CEP57</label>
    </interactant>
    <organismsDiffer>false</organismsDiffer>
    <experiments>3</experiments>
</comment>
<comment type="interaction">
    <interactant intactId="EBI-1050253">
        <id>Q96PC5</id>
    </interactant>
    <interactant intactId="EBI-744586">
        <id>Q9Y6C2</id>
        <label>EMILIN1</label>
    </interactant>
    <organismsDiffer>false</organismsDiffer>
    <experiments>3</experiments>
</comment>
<comment type="interaction">
    <interactant intactId="EBI-1050253">
        <id>Q96PC5</id>
    </interactant>
    <interactant intactId="EBI-741835">
        <id>Q96M61</id>
        <label>MAGEB18</label>
    </interactant>
    <organismsDiffer>false</organismsDiffer>
    <experiments>3</experiments>
</comment>
<comment type="interaction">
    <interactant intactId="EBI-1050253">
        <id>Q96PC5</id>
    </interactant>
    <interactant intactId="EBI-348380">
        <id>P25788</id>
        <label>PSMA3</label>
    </interactant>
    <organismsDiffer>false</organismsDiffer>
    <experiments>3</experiments>
</comment>
<comment type="interaction">
    <interactant intactId="EBI-1050253">
        <id>Q96PC5</id>
    </interactant>
    <interactant intactId="EBI-359444">
        <id>Q9UJF2</id>
        <label>RASAL2</label>
    </interactant>
    <organismsDiffer>false</organismsDiffer>
    <experiments>3</experiments>
</comment>
<comment type="interaction">
    <interactant intactId="EBI-1050253">
        <id>Q96PC5</id>
    </interactant>
    <interactant intactId="EBI-744674">
        <id>O75177</id>
        <label>SS18L1</label>
    </interactant>
    <organismsDiffer>false</organismsDiffer>
    <experiments>3</experiments>
</comment>
<comment type="interaction">
    <interactant intactId="EBI-1050253">
        <id>Q96PC5</id>
    </interactant>
    <interactant intactId="EBI-717810">
        <id>Q08117</id>
        <label>TLE5</label>
    </interactant>
    <organismsDiffer>false</organismsDiffer>
    <experiments>3</experiments>
</comment>
<comment type="interaction">
    <interactant intactId="EBI-1050253">
        <id>Q96PC5</id>
    </interactant>
    <interactant intactId="EBI-10182647">
        <id>Q6PF05-3</id>
        <label>TTC23L</label>
    </interactant>
    <organismsDiffer>false</organismsDiffer>
    <experiments>3</experiments>
</comment>
<comment type="subcellular location">
    <subcellularLocation>
        <location evidence="11 12 13 17">Endoplasmic reticulum membrane</location>
        <topology evidence="12">Single-pass membrane protein</topology>
    </subcellularLocation>
    <text evidence="11 12 13 17">Localizes to endoplasmic reticulum exit sites (ERES), also known as transitional endoplasmic reticulum (tER).</text>
</comment>
<comment type="alternative products">
    <event type="alternative splicing"/>
    <isoform>
        <id>Q96PC5-3</id>
        <name>1</name>
        <name evidence="19">TALI</name>
        <sequence type="displayed"/>
    </isoform>
    <isoform>
        <id>Q96PC5-2</id>
        <name>2</name>
        <sequence type="described" ref="VSP_058472 VSP_058473"/>
    </isoform>
    <isoform>
        <id>Q96PC5-5</id>
        <name>4</name>
        <sequence type="described" ref="VSP_060004 VSP_060011"/>
    </isoform>
    <isoform>
        <id>Q96PC5-6</id>
        <name>5</name>
        <sequence type="described" ref="VSP_060005 VSP_060008 VSP_060009 VSP_060012 VSP_060013"/>
    </isoform>
    <isoform>
        <id>Q96PC5-7</id>
        <name>6</name>
        <name>MEA6</name>
        <sequence type="described" ref="VSP_060006 VSP_060007"/>
    </isoform>
    <isoform>
        <id>Q96PC5-8</id>
        <name>7</name>
        <name>MEA11</name>
        <sequence type="described" ref="VSP_060006 VSP_060007 VSP_060011"/>
    </isoform>
    <isoform>
        <id>Q96PC5-9</id>
        <name>8</name>
        <name>5A</name>
        <sequence type="described" ref="VSP_060004"/>
    </isoform>
    <isoform>
        <id>Q96PC5-10</id>
        <name>9</name>
        <name>5B</name>
        <sequence type="described" ref="VSP_060006 VSP_060007 VSP_060014 VSP_060015"/>
    </isoform>
    <isoform>
        <id>Q96PC5-11</id>
        <name>10</name>
        <sequence type="described" ref="VSP_060003"/>
    </isoform>
    <isoform>
        <id>Q96PC5-12</id>
        <name>11</name>
        <sequence type="described" ref="VSP_060006 VSP_060007 VSP_060010"/>
    </isoform>
    <isoform>
        <id>Q96PC5-13</id>
        <name>12</name>
        <sequence type="described" ref="VSP_060003 VSP_060010"/>
    </isoform>
    <isoform>
        <id>Q96PC5-14</id>
        <name>13</name>
        <sequence type="described" ref="VSP_060005 VSP_060008"/>
    </isoform>
</comment>
<comment type="tissue specificity">
    <text evidence="5 6 14">Highly expressed in liver and weakly in testis. Expression was higher in patients with severe fibrosis or inflammation and chronic hepatitis (PubMed:12586826). Isoform 1 is specifically expressed in lung, testis, small intestine, colon, pancreas, kidney, liver and prostate (PubMed:27138255). Isoform 8 is expressed only in testis (at the protein level). Isoform 8 (at protein level) and isoform 9 are expressed in cutaneous T-cell lymphoma (CTCL) cell lines, colorectal carcinomas, breast carcinomas and melanoma. Isoform 9, but not isoform 5A, is expressed in head and neck squamous cell carcinoma (PubMed:12839582).</text>
</comment>
<comment type="domain">
    <text evidence="11 13 16">The proline-rich domain (PRD) contains repeated PPP motifs. A single PPP motif is necessary and sufficient to mediate interaction with the COPII coat subunits SEC23A and SEC23B (PubMed:21525241, PubMed:27551091). The coiled coil domains mediate interaction with MIA3 (PubMed:21525241). The first coiled coil domain mediates interaction with PREB (PubMed:25202031).</text>
</comment>
<comment type="disease">
    <text>Autoantibodies against MIA2 are present in several cancer types, including benign meningioma and cutaneous T-cell lymphoma (CTCL).</text>
</comment>
<comment type="miscellaneous">
    <molecule>Isoform 1</molecule>
    <text evidence="22 23">Readthrough transcript producing a functional fusion protein MIA2-CTAGE5 with similarity to MIA3.</text>
</comment>
<comment type="similarity">
    <text evidence="21">Belongs to the MIA/OTOR family.</text>
</comment>
<comment type="sequence caution" evidence="21">
    <conflict type="erroneous initiation">
        <sequence resource="EMBL-CDS" id="AAB86589"/>
    </conflict>
    <text>Extended N-terminus.</text>
</comment>
<comment type="sequence caution" evidence="21">
    <conflict type="miscellaneous discrepancy">
        <sequence resource="EMBL-CDS" id="AAL26990"/>
    </conflict>
    <text>Probable cloning artifact.</text>
</comment>
<comment type="sequence caution" evidence="21">
    <conflict type="erroneous initiation">
        <sequence resource="EMBL-CDS" id="BAB15339"/>
    </conflict>
    <text>Truncated N-terminus.</text>
</comment>
<evidence type="ECO:0000250" key="1">
    <source>
        <dbReference type="UniProtKB" id="Q91ZV0"/>
    </source>
</evidence>
<evidence type="ECO:0000255" key="2"/>
<evidence type="ECO:0000255" key="3">
    <source>
        <dbReference type="PROSITE-ProRule" id="PRU00192"/>
    </source>
</evidence>
<evidence type="ECO:0000256" key="4">
    <source>
        <dbReference type="SAM" id="MobiDB-lite"/>
    </source>
</evidence>
<evidence type="ECO:0000269" key="5">
    <source>
    </source>
</evidence>
<evidence type="ECO:0000269" key="6">
    <source>
    </source>
</evidence>
<evidence type="ECO:0000269" key="7">
    <source>
    </source>
</evidence>
<evidence type="ECO:0000269" key="8">
    <source>
    </source>
</evidence>
<evidence type="ECO:0000269" key="9">
    <source>
    </source>
</evidence>
<evidence type="ECO:0000269" key="10">
    <source>
    </source>
</evidence>
<evidence type="ECO:0000269" key="11">
    <source>
    </source>
</evidence>
<evidence type="ECO:0000269" key="12">
    <source>
    </source>
</evidence>
<evidence type="ECO:0000269" key="13">
    <source>
    </source>
</evidence>
<evidence type="ECO:0000269" key="14">
    <source>
    </source>
</evidence>
<evidence type="ECO:0000269" key="15">
    <source>
    </source>
</evidence>
<evidence type="ECO:0000269" key="16">
    <source>
    </source>
</evidence>
<evidence type="ECO:0000269" key="17">
    <source>
    </source>
</evidence>
<evidence type="ECO:0000269" key="18">
    <source>
    </source>
</evidence>
<evidence type="ECO:0000303" key="19">
    <source>
    </source>
</evidence>
<evidence type="ECO:0000303" key="20">
    <source>
    </source>
</evidence>
<evidence type="ECO:0000305" key="21"/>
<evidence type="ECO:0000305" key="22">
    <source>
    </source>
</evidence>
<evidence type="ECO:0000305" key="23">
    <source>
    </source>
</evidence>
<evidence type="ECO:0000312" key="24">
    <source>
        <dbReference type="HGNC" id="HGNC:18432"/>
    </source>
</evidence>
<name>MIA2_HUMAN</name>
<sequence>MAKFGVHRILLLAISLTKCLESTKLLADLKKCGDLECEALINRVSAMRDYRGPDCRYLNFTKGEEISVYVKLAGEREDLWAGSKGKEFGYFPRDAVQIEEVFISEEIQMSTKESDFLCLLGVSYTFDNEDSELNGDYGENIYPYEEDKDEKSSIYESDFQIEPGFYATYESTLFEDQVPALEAPEDIGSTSESKDWEEVVVESMEQDRIPEVHVPPSSAVSGVKEWFGLGGEQAEEKAFESVIEPVQESSFRSRKIAVEDENDLEELNNGEPQTEHQQESESEIDSVPKTQSELASESEHIPKPQSTGWFGGGFTSYLGFGDEDTGLELIAEESNPPLQDFPNSISSDKEATVPCTEILTEKKDTITNDSLSLKPSWFDFGFAILGFAYAKEDKIMLDDRKNEEDGGADEHEHPLTSELDPEKEQEIETIKIIETEDQIDKKPVSEKTDESDTIPYLKKFLYNFDNPWNFQNIPKETELPFPKQILDQNNVIENEETGEFSIDNYPTDNTKVMIFKSSYSLSDMVSNIELPTRIHEEVYFEPSSSKDSDENSKPSVDTEGPALVEIDRSVENTLLNSQMVSTDNSLSSQNYISQKEDASEFQILKYLFQIDVYDFMNSAFSPIVILTERVVAALPEGMRPDSNLYGFPWELVICAAVVGFFAVLFFLWRSFRSVRSRLYVGREKKLALMLSGLIEEKSKLLEKFSLVQKEYEGYEVESSLKDASFEKEATEAQSLEATCEKLNRSNSELEDEILCLEKELKEEKSKHSEQDELMADISKRIQSLEDESKSLKSQVAEAKMTFKIFQMNEERLKIAIKDALNENSQLQESQKQLLQEAEVWKEQVSELNKQKVTFEDSKVHAEQVLNDKESHIKTLTERLLKMKDWAAMLGEDITDDDNLELEMNSESENGAYLDNPPKGALKKLIHAAKLNASLKTLEGERNQIYIQLSEVDKTKEELTEHIKNLQTEQASLQSENTHFENENQKLQQKLKVMTELYQENEMKLHRKLTVEENYRLEKEEKLSKVDEKISHATEELETYRKRAKDLEEELERTIHSYQGQIISHEKKAHDNWLAARNAERNLNDLRKENAHNRQKLTETELKFELLEKDPYALDVPNTAFGREHSPYGPSPLGWPSSETRAFLSPPTLLEGPLRLSPLLPGGGGRGSRGPGNPLDHQITNERGESSCDRLTDPHRAPSDTGSLSPPWDQDRRMMFPPPGQSYPDSALPPQRQDRFCSNSGRLSGPAELRSFNMPSLDKMDGSMPSEMESSRNDTKDDLGNLNVPDSSLPAENEATGPGFVPPPLAPIRGPLFPVDARGPFLRRGPPFPPPPPGAMFGASRDYFPPGDFPGPPPAPFAMRNVYPPRGFPPYLPPRPGFFPPPPHSEGRSEFPSGLIPPSNEPATEHPEPQQET</sequence>
<protein>
    <recommendedName>
        <fullName evidence="21">Melanoma inhibitory activity protein 2</fullName>
        <shortName>MIA protein 2</shortName>
    </recommendedName>
    <alternativeName>
        <fullName evidence="24">CTAGE family member 5 ER export factor</fullName>
    </alternativeName>
    <alternativeName>
        <fullName>Cutaneous T-cell lymphoma-associated antigen 5</fullName>
    </alternativeName>
    <alternativeName>
        <fullName evidence="20">Meningioma-expressed antigen 6/11</fullName>
    </alternativeName>
</protein>
<proteinExistence type="evidence at protein level"/>
<reference key="1">
    <citation type="journal article" date="1997" name="Hum. Mol. Genet.">
        <title>cDNA cloning and chromosomal mapping of a predicted coiled-coil proline-rich protein immunogenic in meningioma patients.</title>
        <authorList>
            <person name="Heckel D."/>
            <person name="Brass N."/>
            <person name="Fischer U."/>
            <person name="Blin N."/>
            <person name="Steudel I."/>
            <person name="Tuereci O."/>
            <person name="Fackler O."/>
            <person name="Zang K.D."/>
            <person name="Meese E."/>
        </authorList>
    </citation>
    <scope>NUCLEOTIDE SEQUENCE [MRNA] (ISOFORMS 6 AND 7)</scope>
    <scope>VARIANT ALA-6 (ISOFORMS 6 AND 7)</scope>
    <scope>VARIANTS GLN-968; VAL-1307 AND ARG-1346</scope>
    <source>
        <tissue>Meningioma</tissue>
    </source>
</reference>
<reference key="2">
    <citation type="journal article" date="2003" name="J. Invest. Dermatol.">
        <title>cTAGE: a cutaneous T cell lymphoma associated antigen family with tumor-specific splicing.</title>
        <authorList>
            <person name="Usener D."/>
            <person name="Schadendorf D."/>
            <person name="Koch J."/>
            <person name="Duebel S."/>
            <person name="Eichmueller S."/>
        </authorList>
    </citation>
    <scope>NUCLEOTIDE SEQUENCE [MRNA] (ISOFORMS 8 AND 9)</scope>
    <scope>VARIANT ALA-6 (ISOFORM 9)</scope>
    <scope>VARIANTS GLN-968 AND ARG-1346</scope>
    <scope>TISSUE SPECIFICITY</scope>
    <source>
        <tissue>Testis</tissue>
    </source>
</reference>
<reference key="3">
    <citation type="journal article" date="2016" name="J. Cell Biol.">
        <title>TANGO1 and Mia2/cTAGE5 (TALI) cooperate to export bulky pre-chylomicrons/VLDLs from the endoplasmic reticulum.</title>
        <authorList>
            <person name="Santos A.J."/>
            <person name="Nogueira C."/>
            <person name="Ortega-Bellido M."/>
            <person name="Malhotra V."/>
        </authorList>
    </citation>
    <scope>NUCLEOTIDE SEQUENCE [MRNA] (ISOFORM 1)</scope>
    <scope>FUNCTION</scope>
    <scope>INTERACTION WITH APOB AND MIA3</scope>
    <scope>TISSUE SPECIFICITY</scope>
</reference>
<reference key="4">
    <citation type="journal article" date="2004" name="Nat. Genet.">
        <title>Complete sequencing and characterization of 21,243 full-length human cDNAs.</title>
        <authorList>
            <person name="Ota T."/>
            <person name="Suzuki Y."/>
            <person name="Nishikawa T."/>
            <person name="Otsuki T."/>
            <person name="Sugiyama T."/>
            <person name="Irie R."/>
            <person name="Wakamatsu A."/>
            <person name="Hayashi K."/>
            <person name="Sato H."/>
            <person name="Nagai K."/>
            <person name="Kimura K."/>
            <person name="Makita H."/>
            <person name="Sekine M."/>
            <person name="Obayashi M."/>
            <person name="Nishi T."/>
            <person name="Shibahara T."/>
            <person name="Tanaka T."/>
            <person name="Ishii S."/>
            <person name="Yamamoto J."/>
            <person name="Saito K."/>
            <person name="Kawai Y."/>
            <person name="Isono Y."/>
            <person name="Nakamura Y."/>
            <person name="Nagahari K."/>
            <person name="Murakami K."/>
            <person name="Yasuda T."/>
            <person name="Iwayanagi T."/>
            <person name="Wagatsuma M."/>
            <person name="Shiratori A."/>
            <person name="Sudo H."/>
            <person name="Hosoiri T."/>
            <person name="Kaku Y."/>
            <person name="Kodaira H."/>
            <person name="Kondo H."/>
            <person name="Sugawara M."/>
            <person name="Takahashi M."/>
            <person name="Kanda K."/>
            <person name="Yokoi T."/>
            <person name="Furuya T."/>
            <person name="Kikkawa E."/>
            <person name="Omura Y."/>
            <person name="Abe K."/>
            <person name="Kamihara K."/>
            <person name="Katsuta N."/>
            <person name="Sato K."/>
            <person name="Tanikawa M."/>
            <person name="Yamazaki M."/>
            <person name="Ninomiya K."/>
            <person name="Ishibashi T."/>
            <person name="Yamashita H."/>
            <person name="Murakawa K."/>
            <person name="Fujimori K."/>
            <person name="Tanai H."/>
            <person name="Kimata M."/>
            <person name="Watanabe M."/>
            <person name="Hiraoka S."/>
            <person name="Chiba Y."/>
            <person name="Ishida S."/>
            <person name="Ono Y."/>
            <person name="Takiguchi S."/>
            <person name="Watanabe S."/>
            <person name="Yosida M."/>
            <person name="Hotuta T."/>
            <person name="Kusano J."/>
            <person name="Kanehori K."/>
            <person name="Takahashi-Fujii A."/>
            <person name="Hara H."/>
            <person name="Tanase T.-O."/>
            <person name="Nomura Y."/>
            <person name="Togiya S."/>
            <person name="Komai F."/>
            <person name="Hara R."/>
            <person name="Takeuchi K."/>
            <person name="Arita M."/>
            <person name="Imose N."/>
            <person name="Musashino K."/>
            <person name="Yuuki H."/>
            <person name="Oshima A."/>
            <person name="Sasaki N."/>
            <person name="Aotsuka S."/>
            <person name="Yoshikawa Y."/>
            <person name="Matsunawa H."/>
            <person name="Ichihara T."/>
            <person name="Shiohata N."/>
            <person name="Sano S."/>
            <person name="Moriya S."/>
            <person name="Momiyama H."/>
            <person name="Satoh N."/>
            <person name="Takami S."/>
            <person name="Terashima Y."/>
            <person name="Suzuki O."/>
            <person name="Nakagawa S."/>
            <person name="Senoh A."/>
            <person name="Mizoguchi H."/>
            <person name="Goto Y."/>
            <person name="Shimizu F."/>
            <person name="Wakebe H."/>
            <person name="Hishigaki H."/>
            <person name="Watanabe T."/>
            <person name="Sugiyama A."/>
            <person name="Takemoto M."/>
            <person name="Kawakami B."/>
            <person name="Yamazaki M."/>
            <person name="Watanabe K."/>
            <person name="Kumagai A."/>
            <person name="Itakura S."/>
            <person name="Fukuzumi Y."/>
            <person name="Fujimori Y."/>
            <person name="Komiyama M."/>
            <person name="Tashiro H."/>
            <person name="Tanigami A."/>
            <person name="Fujiwara T."/>
            <person name="Ono T."/>
            <person name="Yamada K."/>
            <person name="Fujii Y."/>
            <person name="Ozaki K."/>
            <person name="Hirao M."/>
            <person name="Ohmori Y."/>
            <person name="Kawabata A."/>
            <person name="Hikiji T."/>
            <person name="Kobatake N."/>
            <person name="Inagaki H."/>
            <person name="Ikema Y."/>
            <person name="Okamoto S."/>
            <person name="Okitani R."/>
            <person name="Kawakami T."/>
            <person name="Noguchi S."/>
            <person name="Itoh T."/>
            <person name="Shigeta K."/>
            <person name="Senba T."/>
            <person name="Matsumura K."/>
            <person name="Nakajima Y."/>
            <person name="Mizuno T."/>
            <person name="Morinaga M."/>
            <person name="Sasaki M."/>
            <person name="Togashi T."/>
            <person name="Oyama M."/>
            <person name="Hata H."/>
            <person name="Watanabe M."/>
            <person name="Komatsu T."/>
            <person name="Mizushima-Sugano J."/>
            <person name="Satoh T."/>
            <person name="Shirai Y."/>
            <person name="Takahashi Y."/>
            <person name="Nakagawa K."/>
            <person name="Okumura K."/>
            <person name="Nagase T."/>
            <person name="Nomura N."/>
            <person name="Kikuchi H."/>
            <person name="Masuho Y."/>
            <person name="Yamashita R."/>
            <person name="Nakai K."/>
            <person name="Yada T."/>
            <person name="Nakamura Y."/>
            <person name="Ohara O."/>
            <person name="Isogai T."/>
            <person name="Sugano S."/>
        </authorList>
    </citation>
    <scope>NUCLEOTIDE SEQUENCE [LARGE SCALE MRNA] (ISOFORMS 4 AND 5)</scope>
    <scope>NUCLEOTIDE SEQUENCE [LARGE SCALE MRNA] OF 200-1412 (ISOFORM 2)</scope>
    <scope>VARIANTS GLN-968 AND VAL-1307</scope>
    <source>
        <tissue>Teratocarcinoma</tissue>
        <tissue>Tongue</tissue>
    </source>
</reference>
<reference key="5">
    <citation type="journal article" date="2007" name="BMC Genomics">
        <title>The full-ORF clone resource of the German cDNA consortium.</title>
        <authorList>
            <person name="Bechtel S."/>
            <person name="Rosenfelder H."/>
            <person name="Duda A."/>
            <person name="Schmidt C.P."/>
            <person name="Ernst U."/>
            <person name="Wellenreuther R."/>
            <person name="Mehrle A."/>
            <person name="Schuster C."/>
            <person name="Bahr A."/>
            <person name="Bloecker H."/>
            <person name="Heubner D."/>
            <person name="Hoerlein A."/>
            <person name="Michel G."/>
            <person name="Wedler H."/>
            <person name="Koehrer K."/>
            <person name="Ottenwaelder B."/>
            <person name="Poustka A."/>
            <person name="Wiemann S."/>
            <person name="Schupp I."/>
        </authorList>
    </citation>
    <scope>NUCLEOTIDE SEQUENCE [LARGE SCALE MRNA] (ISOFORM 10)</scope>
    <scope>VARIANTS GLN-968 AND ARG-1346</scope>
    <source>
        <tissue>Salivary gland</tissue>
    </source>
</reference>
<reference key="6">
    <citation type="journal article" date="2003" name="Nature">
        <title>The DNA sequence and analysis of human chromosome 14.</title>
        <authorList>
            <person name="Heilig R."/>
            <person name="Eckenberg R."/>
            <person name="Petit J.-L."/>
            <person name="Fonknechten N."/>
            <person name="Da Silva C."/>
            <person name="Cattolico L."/>
            <person name="Levy M."/>
            <person name="Barbe V."/>
            <person name="De Berardinis V."/>
            <person name="Ureta-Vidal A."/>
            <person name="Pelletier E."/>
            <person name="Vico V."/>
            <person name="Anthouard V."/>
            <person name="Rowen L."/>
            <person name="Madan A."/>
            <person name="Qin S."/>
            <person name="Sun H."/>
            <person name="Du H."/>
            <person name="Pepin K."/>
            <person name="Artiguenave F."/>
            <person name="Robert C."/>
            <person name="Cruaud C."/>
            <person name="Bruels T."/>
            <person name="Jaillon O."/>
            <person name="Friedlander L."/>
            <person name="Samson G."/>
            <person name="Brottier P."/>
            <person name="Cure S."/>
            <person name="Segurens B."/>
            <person name="Aniere F."/>
            <person name="Samain S."/>
            <person name="Crespeau H."/>
            <person name="Abbasi N."/>
            <person name="Aiach N."/>
            <person name="Boscus D."/>
            <person name="Dickhoff R."/>
            <person name="Dors M."/>
            <person name="Dubois I."/>
            <person name="Friedman C."/>
            <person name="Gouyvenoux M."/>
            <person name="James R."/>
            <person name="Madan A."/>
            <person name="Mairey-Estrada B."/>
            <person name="Mangenot S."/>
            <person name="Martins N."/>
            <person name="Menard M."/>
            <person name="Oztas S."/>
            <person name="Ratcliffe A."/>
            <person name="Shaffer T."/>
            <person name="Trask B."/>
            <person name="Vacherie B."/>
            <person name="Bellemere C."/>
            <person name="Belser C."/>
            <person name="Besnard-Gonnet M."/>
            <person name="Bartol-Mavel D."/>
            <person name="Boutard M."/>
            <person name="Briez-Silla S."/>
            <person name="Combette S."/>
            <person name="Dufosse-Laurent V."/>
            <person name="Ferron C."/>
            <person name="Lechaplais C."/>
            <person name="Louesse C."/>
            <person name="Muselet D."/>
            <person name="Magdelenat G."/>
            <person name="Pateau E."/>
            <person name="Petit E."/>
            <person name="Sirvain-Trukniewicz P."/>
            <person name="Trybou A."/>
            <person name="Vega-Czarny N."/>
            <person name="Bataille E."/>
            <person name="Bluet E."/>
            <person name="Bordelais I."/>
            <person name="Dubois M."/>
            <person name="Dumont C."/>
            <person name="Guerin T."/>
            <person name="Haffray S."/>
            <person name="Hammadi R."/>
            <person name="Muanga J."/>
            <person name="Pellouin V."/>
            <person name="Robert D."/>
            <person name="Wunderle E."/>
            <person name="Gauguet G."/>
            <person name="Roy A."/>
            <person name="Sainte-Marthe L."/>
            <person name="Verdier J."/>
            <person name="Verdier-Discala C."/>
            <person name="Hillier L.W."/>
            <person name="Fulton L."/>
            <person name="McPherson J."/>
            <person name="Matsuda F."/>
            <person name="Wilson R."/>
            <person name="Scarpelli C."/>
            <person name="Gyapay G."/>
            <person name="Wincker P."/>
            <person name="Saurin W."/>
            <person name="Quetier F."/>
            <person name="Waterston R."/>
            <person name="Hood L."/>
            <person name="Weissenbach J."/>
        </authorList>
    </citation>
    <scope>NUCLEOTIDE SEQUENCE [LARGE SCALE GENOMIC DNA]</scope>
</reference>
<reference key="7">
    <citation type="submission" date="2005-07" db="EMBL/GenBank/DDBJ databases">
        <authorList>
            <person name="Mural R.J."/>
            <person name="Istrail S."/>
            <person name="Sutton G.G."/>
            <person name="Florea L."/>
            <person name="Halpern A.L."/>
            <person name="Mobarry C.M."/>
            <person name="Lippert R."/>
            <person name="Walenz B."/>
            <person name="Shatkay H."/>
            <person name="Dew I."/>
            <person name="Miller J.R."/>
            <person name="Flanigan M.J."/>
            <person name="Edwards N.J."/>
            <person name="Bolanos R."/>
            <person name="Fasulo D."/>
            <person name="Halldorsson B.V."/>
            <person name="Hannenhalli S."/>
            <person name="Turner R."/>
            <person name="Yooseph S."/>
            <person name="Lu F."/>
            <person name="Nusskern D.R."/>
            <person name="Shue B.C."/>
            <person name="Zheng X.H."/>
            <person name="Zhong F."/>
            <person name="Delcher A.L."/>
            <person name="Huson D.H."/>
            <person name="Kravitz S.A."/>
            <person name="Mouchard L."/>
            <person name="Reinert K."/>
            <person name="Remington K.A."/>
            <person name="Clark A.G."/>
            <person name="Waterman M.S."/>
            <person name="Eichler E.E."/>
            <person name="Adams M.D."/>
            <person name="Hunkapiller M.W."/>
            <person name="Myers E.W."/>
            <person name="Venter J.C."/>
        </authorList>
    </citation>
    <scope>NUCLEOTIDE SEQUENCE [LARGE SCALE GENOMIC DNA]</scope>
</reference>
<reference key="8">
    <citation type="journal article" date="2004" name="Genome Res.">
        <title>The status, quality, and expansion of the NIH full-length cDNA project: the Mammalian Gene Collection (MGC).</title>
        <authorList>
            <consortium name="The MGC Project Team"/>
        </authorList>
    </citation>
    <scope>NUCLEOTIDE SEQUENCE [LARGE SCALE MRNA] (ISOFORMS 2; 11 AND 12)</scope>
    <scope>VARIANT ASP-11 (ISOFORM 11)</scope>
    <scope>VARIANTS ASN-813 AND VAL-1307</scope>
</reference>
<reference key="9">
    <citation type="journal article" date="2003" name="J. Biol. Chem.">
        <title>Specific expression and regulation of the new melanoma inhibitory activity-related gene MIA2 in hepatocytes.</title>
        <authorList>
            <person name="Bosserhoff A.K."/>
            <person name="Moser M."/>
            <person name="Schoelmerich J."/>
            <person name="Buettner R."/>
            <person name="Hellerbrand C."/>
        </authorList>
    </citation>
    <scope>NUCLEOTIDE SEQUENCE [MRNA] OF 1-522 (ISOFORM 1/2)</scope>
    <scope>TISSUE SPECIFICITY</scope>
    <source>
        <tissue>Embryo</tissue>
    </source>
</reference>
<reference key="10">
    <citation type="journal article" date="2011" name="J. Lipid Res.">
        <title>Reduced cholesterol and triglycerides in mice with a mutation in Mia2, a liver protein that localizes to ER exit sites.</title>
        <authorList>
            <person name="Pitman J.L."/>
            <person name="Bonnet D.J."/>
            <person name="Curtiss L.K."/>
            <person name="Gekakis N."/>
        </authorList>
    </citation>
    <scope>SUBCELLULAR LOCATION</scope>
    <scope>TOPOLOGY</scope>
</reference>
<reference key="11">
    <citation type="journal article" date="2011" name="Mol. Biol. Cell">
        <title>cTAGE5 mediates collagen secretion through interaction with TANGO1 at endoplasmic reticulum exit sites.</title>
        <authorList>
            <person name="Saito K."/>
            <person name="Yamashiro K."/>
            <person name="Ichikawa Y."/>
            <person name="Erlmann P."/>
            <person name="Kontani K."/>
            <person name="Malhotra V."/>
            <person name="Katada T."/>
        </authorList>
    </citation>
    <scope>FUNCTION</scope>
    <scope>INTERACTION WITH MIA3; SEC23A AND SEC24C</scope>
    <scope>SUBCELLULAR LOCATION</scope>
    <scope>DOMAIN</scope>
    <scope>REGION</scope>
</reference>
<reference key="12">
    <citation type="journal article" date="2014" name="J. Cell Biol.">
        <title>Concentration of Sec12 at ER exit sites via interaction with cTAGE5 is required for collagen export.</title>
        <authorList>
            <person name="Saito K."/>
            <person name="Yamashiro K."/>
            <person name="Shimazu N."/>
            <person name="Tanabe T."/>
            <person name="Kontani K."/>
            <person name="Katada T."/>
        </authorList>
    </citation>
    <scope>FUNCTION</scope>
    <scope>INTERACTION WITH MIA3 AND PREB</scope>
    <scope>SUBCELLULAR LOCATION</scope>
    <scope>DOMAIN</scope>
</reference>
<reference key="13">
    <citation type="journal article" date="2014" name="J. Proteomics">
        <title>An enzyme assisted RP-RPLC approach for in-depth analysis of human liver phosphoproteome.</title>
        <authorList>
            <person name="Bian Y."/>
            <person name="Song C."/>
            <person name="Cheng K."/>
            <person name="Dong M."/>
            <person name="Wang F."/>
            <person name="Huang J."/>
            <person name="Sun D."/>
            <person name="Wang L."/>
            <person name="Ye M."/>
            <person name="Zou H."/>
        </authorList>
    </citation>
    <scope>IDENTIFICATION BY MASS SPECTROMETRY [LARGE SCALE ANALYSIS]</scope>
    <source>
        <tissue>Liver</tissue>
    </source>
</reference>
<reference key="14">
    <citation type="journal article" date="2016" name="Mol. Biol. Cell">
        <title>Dual function of cTAGE5 in collagen export from the endoplasmic reticulum.</title>
        <authorList>
            <person name="Tanabe T."/>
            <person name="Maeda M."/>
            <person name="Saito K."/>
            <person name="Katada T."/>
        </authorList>
    </citation>
    <scope>FUNCTION</scope>
    <scope>INTERACTION WITH MIA3 AND PREB</scope>
    <scope>MUTAGENESIS OF TYR-679; LYS-697; SER-705 AND LEU-720</scope>
</reference>
<reference key="15">
    <citation type="journal article" date="2016" name="Proc. Natl. Acad. Sci. U.S.A.">
        <title>TANGO1/cTAGE5 receptor as a polyvalent template for assembly of large COPII coats.</title>
        <authorList>
            <person name="Ma W."/>
            <person name="Goldberg J."/>
        </authorList>
    </citation>
    <scope>INTERACTION WITH SEC23A AND SEC23B</scope>
    <scope>DOMAIN</scope>
    <scope>REGION</scope>
</reference>
<reference key="16">
    <citation type="journal article" date="2017" name="J. Cell Biol.">
        <title>TANGO1 recruits Sec16 to coordinately organize ER exit sites for efficient secretion.</title>
        <authorList>
            <person name="Maeda M."/>
            <person name="Katada T."/>
            <person name="Saito K."/>
        </authorList>
    </citation>
    <scope>SUBCELLULAR LOCATION</scope>
</reference>
<reference key="17">
    <citation type="journal article" date="2006" name="Science">
        <title>The consensus coding sequences of human breast and colorectal cancers.</title>
        <authorList>
            <person name="Sjoeblom T."/>
            <person name="Jones S."/>
            <person name="Wood L.D."/>
            <person name="Parsons D.W."/>
            <person name="Lin J."/>
            <person name="Barber T.D."/>
            <person name="Mandelker D."/>
            <person name="Leary R.J."/>
            <person name="Ptak J."/>
            <person name="Silliman N."/>
            <person name="Szabo S."/>
            <person name="Buckhaults P."/>
            <person name="Farrell C."/>
            <person name="Meeh P."/>
            <person name="Markowitz S.D."/>
            <person name="Willis J."/>
            <person name="Dawson D."/>
            <person name="Willson J.K.V."/>
            <person name="Gazdar A.F."/>
            <person name="Hartigan J."/>
            <person name="Wu L."/>
            <person name="Liu C."/>
            <person name="Parmigiani G."/>
            <person name="Park B.H."/>
            <person name="Bachman K.E."/>
            <person name="Papadopoulos N."/>
            <person name="Vogelstein B."/>
            <person name="Kinzler K.W."/>
            <person name="Velculescu V.E."/>
        </authorList>
    </citation>
    <scope>VARIANT [LARGE SCALE ANALYSIS] HIS-437</scope>
</reference>
<feature type="signal peptide" evidence="2">
    <location>
        <begin position="1"/>
        <end position="19"/>
    </location>
</feature>
<feature type="chain" id="PRO_0000019031" description="Melanoma inhibitory activity protein 2">
    <location>
        <begin position="20"/>
        <end position="1412"/>
    </location>
</feature>
<feature type="topological domain" description="Lumenal" evidence="21">
    <location>
        <begin position="20"/>
        <end position="605"/>
    </location>
</feature>
<feature type="intramembrane region" evidence="2">
    <location>
        <begin position="606"/>
        <end position="626"/>
    </location>
</feature>
<feature type="topological domain" description="Lumenal" evidence="21">
    <location>
        <begin position="627"/>
        <end position="646"/>
    </location>
</feature>
<feature type="transmembrane region" description="Helical" evidence="2">
    <location>
        <begin position="647"/>
        <end position="667"/>
    </location>
</feature>
<feature type="topological domain" description="Cytoplasmic" evidence="21">
    <location>
        <begin position="668"/>
        <end position="1412"/>
    </location>
</feature>
<feature type="domain" description="SH3" evidence="3">
    <location>
        <begin position="39"/>
        <end position="101"/>
    </location>
</feature>
<feature type="region of interest" description="Disordered" evidence="4">
    <location>
        <begin position="260"/>
        <end position="308"/>
    </location>
</feature>
<feature type="region of interest" description="Disordered" evidence="4">
    <location>
        <begin position="401"/>
        <end position="424"/>
    </location>
</feature>
<feature type="region of interest" description="Disordered" evidence="4">
    <location>
        <begin position="540"/>
        <end position="562"/>
    </location>
</feature>
<feature type="region of interest" description="Mediates interaction with MIA3" evidence="11">
    <location>
        <begin position="669"/>
        <end position="1258"/>
    </location>
</feature>
<feature type="region of interest" description="Disordered" evidence="4">
    <location>
        <begin position="1153"/>
        <end position="1304"/>
    </location>
</feature>
<feature type="region of interest" description="Proline-rich domain (PRD); mediates interaction with the COPII coat subunits SEC23A and SEC23B" evidence="11 16">
    <location>
        <begin position="1259"/>
        <end position="1412"/>
    </location>
</feature>
<feature type="region of interest" description="Disordered" evidence="4">
    <location>
        <begin position="1316"/>
        <end position="1412"/>
    </location>
</feature>
<feature type="coiled-coil region" evidence="2">
    <location>
        <begin position="725"/>
        <end position="850"/>
    </location>
</feature>
<feature type="coiled-coil region" evidence="2">
    <location>
        <begin position="948"/>
        <end position="1102"/>
    </location>
</feature>
<feature type="compositionally biased region" description="Basic and acidic residues" evidence="4">
    <location>
        <begin position="540"/>
        <end position="552"/>
    </location>
</feature>
<feature type="compositionally biased region" description="Gly residues" evidence="4">
    <location>
        <begin position="1160"/>
        <end position="1169"/>
    </location>
</feature>
<feature type="compositionally biased region" description="Basic and acidic residues" evidence="4">
    <location>
        <begin position="1178"/>
        <end position="1197"/>
    </location>
</feature>
<feature type="compositionally biased region" description="Basic and acidic residues" evidence="4">
    <location>
        <begin position="1268"/>
        <end position="1278"/>
    </location>
</feature>
<feature type="compositionally biased region" description="Pro residues" evidence="4">
    <location>
        <begin position="1346"/>
        <end position="1355"/>
    </location>
</feature>
<feature type="compositionally biased region" description="Pro residues" evidence="4">
    <location>
        <begin position="1365"/>
        <end position="1383"/>
    </location>
</feature>
<feature type="compositionally biased region" description="Basic and acidic residues" evidence="4">
    <location>
        <begin position="1402"/>
        <end position="1412"/>
    </location>
</feature>
<feature type="glycosylation site" description="N-linked (GlcNAc...) asparagine" evidence="2">
    <location>
        <position position="59"/>
    </location>
</feature>
<feature type="glycosylation site" description="N-linked (GlcNAc...) asparagine" evidence="2">
    <location>
        <position position="368"/>
    </location>
</feature>
<feature type="splice variant" id="VSP_060003" description="In isoform 10 and isoform 12.">
    <location>
        <begin position="1"/>
        <end position="688"/>
    </location>
</feature>
<feature type="splice variant" id="VSP_060004" description="In isoform 4 and isoform 8.">
    <location>
        <begin position="1"/>
        <end position="637"/>
    </location>
</feature>
<feature type="splice variant" id="VSP_060005" description="In isoform 5 and isoform 13.">
    <location>
        <begin position="1"/>
        <end position="620"/>
    </location>
</feature>
<feature type="splice variant" id="VSP_060006" description="In isoform 6, isoform 7, isoform 9 and isoform 11.">
    <location>
        <begin position="1"/>
        <end position="608"/>
    </location>
</feature>
<feature type="splice variant" id="VSP_060007" description="In isoform 6, isoform 7, isoform 9 and isoform 11.">
    <original>QIDVYDFMNSAFSPIVILTE</original>
    <variation>MEEPGVTPQPYLGLLLEELR</variation>
    <location>
        <begin position="609"/>
        <end position="628"/>
    </location>
</feature>
<feature type="splice variant" id="VSP_060008" description="In isoform 5 and isoform 13.">
    <original>SPIVILTER</original>
    <variation>MELKSPEEE</variation>
    <location>
        <begin position="621"/>
        <end position="629"/>
    </location>
</feature>
<feature type="splice variant" id="VSP_058472" description="In isoform 2.">
    <original>VAALPEGMRPDSNLYGFPWELVIC</original>
    <variation>SLPFKPFAIILPILLNIRVATKYV</variation>
    <location>
        <begin position="631"/>
        <end position="654"/>
    </location>
</feature>
<feature type="splice variant" id="VSP_058473" description="In isoform 2.">
    <location>
        <begin position="655"/>
        <end position="1412"/>
    </location>
</feature>
<feature type="splice variant" id="VSP_060009" description="In isoform 5.">
    <location>
        <begin position="711"/>
        <end position="736"/>
    </location>
</feature>
<feature type="splice variant" id="VSP_060010" description="In isoform 11 and isoform 12.">
    <original>E</original>
    <variation>EVENQM</variation>
    <location>
        <position position="736"/>
    </location>
</feature>
<feature type="splice variant" id="VSP_060011" description="In isoform 4 and isoform 7.">
    <location>
        <begin position="1123"/>
        <end position="1165"/>
    </location>
</feature>
<feature type="splice variant" id="VSP_060012" description="In isoform 5.">
    <location>
        <begin position="1255"/>
        <end position="1325"/>
    </location>
</feature>
<feature type="splice variant" id="VSP_060013" description="In isoform 5.">
    <location>
        <begin position="1333"/>
        <end position="1355"/>
    </location>
</feature>
<feature type="splice variant" id="VSP_060014" description="In isoform 9.">
    <original>MRNVYPPRGFPPYLPPRPGFFP</original>
    <variation>SARSPPGAGAPASGRGLGGPQK</variation>
    <location>
        <begin position="1358"/>
        <end position="1379"/>
    </location>
</feature>
<feature type="splice variant" id="VSP_060015" description="In isoform 9.">
    <location>
        <begin position="1380"/>
        <end position="1412"/>
    </location>
</feature>
<feature type="sequence variant" id="VAR_036460" description="In a breast cancer sample; somatic mutation." evidence="9">
    <original>D</original>
    <variation>H</variation>
    <location>
        <position position="437"/>
    </location>
</feature>
<feature type="sequence variant" id="VAR_047891" description="In dbSNP:rs17855896." evidence="8">
    <original>K</original>
    <variation>N</variation>
    <location>
        <position position="813"/>
    </location>
</feature>
<feature type="sequence variant" id="VAR_047892" description="In dbSNP:rs10162564.">
    <original>K</original>
    <variation>E</variation>
    <location>
        <position position="858"/>
    </location>
</feature>
<feature type="sequence variant" id="VAR_047893" description="In dbSNP:rs1950952." evidence="6 7 10 18">
    <original>E</original>
    <variation>Q</variation>
    <location>
        <position position="968"/>
    </location>
</feature>
<feature type="sequence variant" id="VAR_047894" description="In dbSNP:rs17109109.">
    <original>N</original>
    <variation>S</variation>
    <location>
        <position position="983"/>
    </location>
</feature>
<feature type="sequence variant" id="VAR_047895" description="In dbSNP:rs1140952." evidence="7 8 18">
    <original>I</original>
    <variation>V</variation>
    <location>
        <position position="1307"/>
    </location>
</feature>
<feature type="sequence variant" id="VAR_047896" description="In dbSNP:rs1060878." evidence="6 10 18">
    <original>G</original>
    <variation>R</variation>
    <location>
        <position position="1346"/>
    </location>
</feature>
<feature type="mutagenesis site" description="No effect on interaction with PERB." evidence="15">
    <original>Y</original>
    <variation>A</variation>
    <location>
        <position position="679"/>
    </location>
</feature>
<feature type="mutagenesis site" description="Loss of interaction with PERB. Unable to recruit PERB to the endoplasmic reticulum exit sites. Loss of function in collagen VII transport. No effect on interaction with MIA3." evidence="15">
    <original>K</original>
    <variation>A</variation>
    <location>
        <position position="697"/>
    </location>
</feature>
<feature type="mutagenesis site" description="Decreased interaction with PERB. No effect on interaction with MIA3." evidence="15">
    <original>S</original>
    <variation>A</variation>
    <location>
        <position position="705"/>
    </location>
</feature>
<feature type="mutagenesis site" description="No effect on interaction with PERB." evidence="15">
    <original>L</original>
    <variation>A</variation>
    <location>
        <position position="720"/>
    </location>
</feature>
<feature type="sequence conflict" description="In Ref. 9; AAL26990." evidence="21" ref="9">
    <location>
        <position position="83"/>
    </location>
</feature>
<feature type="sequence conflict" description="In Ref. 5; CAE45997." evidence="21" ref="5">
    <original>S</original>
    <variation>N</variation>
    <location>
        <position position="698"/>
    </location>
</feature>
<feature type="sequence conflict" description="In Ref. 5; CAE45997." evidence="21" ref="5">
    <original>I</original>
    <variation>M</variation>
    <location>
        <position position="753"/>
    </location>
</feature>
<feature type="sequence conflict" description="In Ref. 1; AAB86589/AAB86593." evidence="21" ref="1">
    <original>K</original>
    <variation>Q</variation>
    <location>
        <position position="803"/>
    </location>
</feature>
<feature type="sequence conflict" description="In Ref. 1; AAB86593." evidence="21" ref="1">
    <original>Q</original>
    <variation>P</variation>
    <location>
        <position position="806"/>
    </location>
</feature>
<feature type="sequence conflict" description="In Ref. 1; AAB86593." evidence="21" ref="1">
    <original>R</original>
    <variation>T</variation>
    <location>
        <position position="1154"/>
    </location>
</feature>
<feature type="sequence conflict" description="In Ref. 1; AAB86593." evidence="21" ref="1">
    <original>P</original>
    <variation>L</variation>
    <location>
        <position position="1197"/>
    </location>
</feature>
<feature type="sequence conflict" description="In Ref. 1; AAB86593." evidence="21" ref="1">
    <original>S</original>
    <variation>F</variation>
    <location>
        <position position="1202"/>
    </location>
</feature>
<feature type="sequence conflict" description="In Ref. 2; AAN77610." evidence="21" ref="2">
    <original>R</original>
    <variation>M</variation>
    <location>
        <position position="1212"/>
    </location>
</feature>
<feature type="sequence conflict" description="In Ref. 2; AAN77610." evidence="21" ref="2">
    <original>S</original>
    <variation>F</variation>
    <location>
        <position position="1384"/>
    </location>
</feature>
<feature type="sequence variant" id="VAR_082860" description="In dbSNP:rs7140561." evidence="18">
    <original>V</original>
    <variation>A</variation>
    <location sequence="Q96PC5-7">
        <position position="6"/>
    </location>
</feature>
<feature type="sequence variant" id="VAR_082861" description="In dbSNP:rs7140561." evidence="18">
    <original>V</original>
    <variation>A</variation>
    <location sequence="Q96PC5-8">
        <position position="6"/>
    </location>
</feature>
<feature type="sequence variant" id="VAR_082862" description="In dbSNP:rs7140561." evidence="6">
    <original>V</original>
    <variation>A</variation>
    <location sequence="Q96PC5-10">
        <position position="6"/>
    </location>
</feature>
<feature type="sequence variant" id="VAR_082863" description="In dbSNP:rs7140561." evidence="21">
    <original>V</original>
    <variation>A</variation>
    <location sequence="Q96PC5-12">
        <position position="6"/>
    </location>
</feature>
<feature type="sequence variant" id="VAR_082864" description="In dbSNP:rs17855895." evidence="8">
    <original>Y</original>
    <variation>D</variation>
    <location sequence="Q96PC5-12">
        <position position="11"/>
    </location>
</feature>
<keyword id="KW-0025">Alternative splicing</keyword>
<keyword id="KW-0175">Coiled coil</keyword>
<keyword id="KW-0256">Endoplasmic reticulum</keyword>
<keyword id="KW-0325">Glycoprotein</keyword>
<keyword id="KW-0472">Membrane</keyword>
<keyword id="KW-1267">Proteomics identification</keyword>
<keyword id="KW-1185">Reference proteome</keyword>
<keyword id="KW-0728">SH3 domain</keyword>
<keyword id="KW-0732">Signal</keyword>
<keyword id="KW-0812">Transmembrane</keyword>
<keyword id="KW-1133">Transmembrane helix</keyword>